<feature type="signal peptide" evidence="5 6">
    <location>
        <begin position="1"/>
        <end position="26"/>
    </location>
</feature>
<feature type="chain" id="PRO_0000012726" description="Endothelin receptor type B">
    <location>
        <begin position="27"/>
        <end position="441"/>
    </location>
</feature>
<feature type="topological domain" description="Extracellular" evidence="2">
    <location>
        <begin position="27"/>
        <end position="100"/>
    </location>
</feature>
<feature type="transmembrane region" description="Helical; Name=1" evidence="2">
    <location>
        <begin position="101"/>
        <end position="125"/>
    </location>
</feature>
<feature type="topological domain" description="Cytoplasmic" evidence="2">
    <location>
        <begin position="126"/>
        <end position="136"/>
    </location>
</feature>
<feature type="transmembrane region" description="Helical; Name=2" evidence="2">
    <location>
        <begin position="137"/>
        <end position="162"/>
    </location>
</feature>
<feature type="topological domain" description="Extracellular" evidence="2">
    <location>
        <begin position="163"/>
        <end position="174"/>
    </location>
</feature>
<feature type="transmembrane region" description="Helical; Name=3" evidence="2">
    <location>
        <begin position="175"/>
        <end position="196"/>
    </location>
</feature>
<feature type="topological domain" description="Cytoplasmic" evidence="2">
    <location>
        <begin position="197"/>
        <end position="217"/>
    </location>
</feature>
<feature type="transmembrane region" description="Helical; Name=4" evidence="2">
    <location>
        <begin position="218"/>
        <end position="242"/>
    </location>
</feature>
<feature type="topological domain" description="Extracellular" evidence="2">
    <location>
        <begin position="243"/>
        <end position="270"/>
    </location>
</feature>
<feature type="transmembrane region" description="Helical; Name=5" evidence="2">
    <location>
        <begin position="271"/>
        <end position="295"/>
    </location>
</feature>
<feature type="topological domain" description="Cytoplasmic" evidence="2">
    <location>
        <begin position="296"/>
        <end position="323"/>
    </location>
</feature>
<feature type="transmembrane region" description="Helical; Name=6" evidence="2">
    <location>
        <begin position="324"/>
        <end position="349"/>
    </location>
</feature>
<feature type="topological domain" description="Extracellular" evidence="2">
    <location>
        <begin position="350"/>
        <end position="361"/>
    </location>
</feature>
<feature type="transmembrane region" description="Helical; Name=7" evidence="2">
    <location>
        <begin position="362"/>
        <end position="388"/>
    </location>
</feature>
<feature type="topological domain" description="Cytoplasmic" evidence="2">
    <location>
        <begin position="389"/>
        <end position="441"/>
    </location>
</feature>
<feature type="region of interest" description="Disordered" evidence="4">
    <location>
        <begin position="30"/>
        <end position="87"/>
    </location>
</feature>
<feature type="compositionally biased region" description="Low complexity" evidence="4">
    <location>
        <begin position="41"/>
        <end position="53"/>
    </location>
</feature>
<feature type="compositionally biased region" description="Polar residues" evidence="4">
    <location>
        <begin position="54"/>
        <end position="70"/>
    </location>
</feature>
<feature type="modified residue" description="Phosphoserine" evidence="6">
    <location>
        <position position="304"/>
    </location>
</feature>
<feature type="modified residue" description="Phosphoserine" evidence="6">
    <location>
        <position position="418"/>
    </location>
</feature>
<feature type="modified residue" description="Phosphoserine" evidence="7">
    <location>
        <position position="434"/>
    </location>
</feature>
<feature type="modified residue" description="Phosphoserine" evidence="7">
    <location>
        <position position="435"/>
    </location>
</feature>
<feature type="modified residue" description="Phosphotyrosine" evidence="6">
    <location>
        <position position="438"/>
    </location>
</feature>
<feature type="modified residue" description="Phosphoserine" evidence="6">
    <location>
        <position position="439"/>
    </location>
</feature>
<feature type="modified residue" description="Phosphoserine" evidence="6">
    <location>
        <position position="440"/>
    </location>
</feature>
<feature type="modified residue" description="Phosphoserine" evidence="6">
    <location>
        <position position="441"/>
    </location>
</feature>
<feature type="lipid moiety-binding region" description="S-palmitoyl cysteine" evidence="6">
    <location>
        <position position="402"/>
    </location>
</feature>
<feature type="lipid moiety-binding region" description="S-palmitoyl cysteine" evidence="6">
    <location>
        <position position="404"/>
    </location>
</feature>
<feature type="disulfide bond" evidence="3">
    <location>
        <begin position="173"/>
        <end position="254"/>
    </location>
</feature>
<keyword id="KW-1003">Cell membrane</keyword>
<keyword id="KW-0903">Direct protein sequencing</keyword>
<keyword id="KW-1015">Disulfide bond</keyword>
<keyword id="KW-0297">G-protein coupled receptor</keyword>
<keyword id="KW-0449">Lipoprotein</keyword>
<keyword id="KW-0472">Membrane</keyword>
<keyword id="KW-0564">Palmitate</keyword>
<keyword id="KW-0597">Phosphoprotein</keyword>
<keyword id="KW-0675">Receptor</keyword>
<keyword id="KW-1185">Reference proteome</keyword>
<keyword id="KW-0732">Signal</keyword>
<keyword id="KW-0807">Transducer</keyword>
<keyword id="KW-0812">Transmembrane</keyword>
<keyword id="KW-1133">Transmembrane helix</keyword>
<gene>
    <name type="primary">EDNRB</name>
</gene>
<accession>P28088</accession>
<accession>Q0VCB3</accession>
<accession>Q9TSB9</accession>
<name>EDNRB_BOVIN</name>
<comment type="function">
    <text>Non-specific receptor for endothelin 1, 2, and 3. Mediates its action by association with G proteins that activate a phosphatidylinositol-calcium second messenger system.</text>
</comment>
<comment type="subcellular location">
    <subcellularLocation>
        <location evidence="1">Cell membrane</location>
        <topology>Multi-pass membrane protein</topology>
    </subcellularLocation>
    <text evidence="1">internalized after activation by endothelins.</text>
</comment>
<comment type="PTM">
    <text evidence="6">It is not sure whether phosphorylation is on Ser-434 or Ser-435.</text>
</comment>
<comment type="similarity">
    <text evidence="3">Belongs to the G-protein coupled receptor 1 family. Endothelin receptor subfamily. EDNRB sub-subfamily.</text>
</comment>
<comment type="caution">
    <text evidence="8 9">N-terminal sequencing (PubMed:9422751) indicates the presence of a signal peptide but an unprocessed form where the signal sequence is not cleaved has also been detected (PubMed:8529649). It is unclear if this exists in vivo.</text>
</comment>
<dbReference type="EMBL" id="D10994">
    <property type="protein sequence ID" value="BAA01762.1"/>
    <property type="molecule type" value="Genomic_DNA"/>
</dbReference>
<dbReference type="EMBL" id="D90456">
    <property type="protein sequence ID" value="BAA14422.1"/>
    <property type="molecule type" value="mRNA"/>
</dbReference>
<dbReference type="EMBL" id="BC120256">
    <property type="protein sequence ID" value="AAI20257.1"/>
    <property type="molecule type" value="mRNA"/>
</dbReference>
<dbReference type="PIR" id="A41591">
    <property type="entry name" value="A41591"/>
</dbReference>
<dbReference type="RefSeq" id="NP_776734.1">
    <property type="nucleotide sequence ID" value="NM_174309.2"/>
</dbReference>
<dbReference type="RefSeq" id="XP_005213931.1">
    <property type="nucleotide sequence ID" value="XM_005213874.3"/>
</dbReference>
<dbReference type="SMR" id="P28088"/>
<dbReference type="FunCoup" id="P28088">
    <property type="interactions" value="436"/>
</dbReference>
<dbReference type="STRING" id="9913.ENSBTAP00000006979"/>
<dbReference type="BindingDB" id="P28088"/>
<dbReference type="ChEMBL" id="CHEMBL4401"/>
<dbReference type="iPTMnet" id="P28088"/>
<dbReference type="SwissPalm" id="P28088"/>
<dbReference type="PaxDb" id="9913-ENSBTAP00000006979"/>
<dbReference type="Ensembl" id="ENSBTAT00000070002.2">
    <property type="protein sequence ID" value="ENSBTAP00000064163.1"/>
    <property type="gene ID" value="ENSBTAG00000005299.6"/>
</dbReference>
<dbReference type="GeneID" id="281750"/>
<dbReference type="KEGG" id="bta:281750"/>
<dbReference type="CTD" id="1910"/>
<dbReference type="VEuPathDB" id="HostDB:ENSBTAG00000005299"/>
<dbReference type="VGNC" id="VGNC:28330">
    <property type="gene designation" value="EDNRB"/>
</dbReference>
<dbReference type="eggNOG" id="KOG3656">
    <property type="taxonomic scope" value="Eukaryota"/>
</dbReference>
<dbReference type="GeneTree" id="ENSGT01120000271837"/>
<dbReference type="HOGENOM" id="CLU_009579_28_0_1"/>
<dbReference type="InParanoid" id="P28088"/>
<dbReference type="OMA" id="YDQSDPN"/>
<dbReference type="OrthoDB" id="10037617at2759"/>
<dbReference type="TreeFam" id="TF331292"/>
<dbReference type="Reactome" id="R-BTA-375276">
    <property type="pathway name" value="Peptide ligand-binding receptors"/>
</dbReference>
<dbReference type="Reactome" id="R-BTA-416476">
    <property type="pathway name" value="G alpha (q) signalling events"/>
</dbReference>
<dbReference type="PRO" id="PR:P28088"/>
<dbReference type="Proteomes" id="UP000009136">
    <property type="component" value="Chromosome 12"/>
</dbReference>
<dbReference type="Bgee" id="ENSBTAG00000005299">
    <property type="expression patterns" value="Expressed in pigment epithelium of eye and 98 other cell types or tissues"/>
</dbReference>
<dbReference type="GO" id="GO:0005886">
    <property type="term" value="C:plasma membrane"/>
    <property type="evidence" value="ECO:0000250"/>
    <property type="project" value="UniProtKB"/>
</dbReference>
<dbReference type="GO" id="GO:0004962">
    <property type="term" value="F:endothelin receptor activity"/>
    <property type="evidence" value="ECO:0000250"/>
    <property type="project" value="UniProtKB"/>
</dbReference>
<dbReference type="GO" id="GO:0017046">
    <property type="term" value="F:peptide hormone binding"/>
    <property type="evidence" value="ECO:0007669"/>
    <property type="project" value="Ensembl"/>
</dbReference>
<dbReference type="GO" id="GO:0032341">
    <property type="term" value="P:aldosterone metabolic process"/>
    <property type="evidence" value="ECO:0007669"/>
    <property type="project" value="Ensembl"/>
</dbReference>
<dbReference type="GO" id="GO:0070588">
    <property type="term" value="P:calcium ion transmembrane transport"/>
    <property type="evidence" value="ECO:0007669"/>
    <property type="project" value="Ensembl"/>
</dbReference>
<dbReference type="GO" id="GO:0019722">
    <property type="term" value="P:calcium-mediated signaling"/>
    <property type="evidence" value="ECO:0000250"/>
    <property type="project" value="UniProtKB"/>
</dbReference>
<dbReference type="GO" id="GO:0060070">
    <property type="term" value="P:canonical Wnt signaling pathway"/>
    <property type="evidence" value="ECO:0007669"/>
    <property type="project" value="Ensembl"/>
</dbReference>
<dbReference type="GO" id="GO:0160093">
    <property type="term" value="P:chordate pharynx development"/>
    <property type="evidence" value="ECO:0007669"/>
    <property type="project" value="Ensembl"/>
</dbReference>
<dbReference type="GO" id="GO:0048066">
    <property type="term" value="P:developmental pigmentation"/>
    <property type="evidence" value="ECO:0000318"/>
    <property type="project" value="GO_Central"/>
</dbReference>
<dbReference type="GO" id="GO:0086100">
    <property type="term" value="P:endothelin receptor signaling pathway"/>
    <property type="evidence" value="ECO:0000250"/>
    <property type="project" value="UniProtKB"/>
</dbReference>
<dbReference type="GO" id="GO:0048484">
    <property type="term" value="P:enteric nervous system development"/>
    <property type="evidence" value="ECO:0007669"/>
    <property type="project" value="Ensembl"/>
</dbReference>
<dbReference type="GO" id="GO:0035645">
    <property type="term" value="P:enteric smooth muscle cell differentiation"/>
    <property type="evidence" value="ECO:0007669"/>
    <property type="project" value="Ensembl"/>
</dbReference>
<dbReference type="GO" id="GO:0061028">
    <property type="term" value="P:establishment of endothelial barrier"/>
    <property type="evidence" value="ECO:0007669"/>
    <property type="project" value="Ensembl"/>
</dbReference>
<dbReference type="GO" id="GO:0010467">
    <property type="term" value="P:gene expression"/>
    <property type="evidence" value="ECO:0007669"/>
    <property type="project" value="Ensembl"/>
</dbReference>
<dbReference type="GO" id="GO:0030202">
    <property type="term" value="P:heparin proteoglycan metabolic process"/>
    <property type="evidence" value="ECO:0007669"/>
    <property type="project" value="Ensembl"/>
</dbReference>
<dbReference type="GO" id="GO:0048246">
    <property type="term" value="P:macrophage chemotaxis"/>
    <property type="evidence" value="ECO:0007669"/>
    <property type="project" value="Ensembl"/>
</dbReference>
<dbReference type="GO" id="GO:0030318">
    <property type="term" value="P:melanocyte differentiation"/>
    <property type="evidence" value="ECO:0007669"/>
    <property type="project" value="Ensembl"/>
</dbReference>
<dbReference type="GO" id="GO:0014043">
    <property type="term" value="P:negative regulation of neuron maturation"/>
    <property type="evidence" value="ECO:0007669"/>
    <property type="project" value="Ensembl"/>
</dbReference>
<dbReference type="GO" id="GO:0051248">
    <property type="term" value="P:negative regulation of protein metabolic process"/>
    <property type="evidence" value="ECO:0007669"/>
    <property type="project" value="Ensembl"/>
</dbReference>
<dbReference type="GO" id="GO:0000122">
    <property type="term" value="P:negative regulation of transcription by RNA polymerase II"/>
    <property type="evidence" value="ECO:0007669"/>
    <property type="project" value="Ensembl"/>
</dbReference>
<dbReference type="GO" id="GO:0001755">
    <property type="term" value="P:neural crest cell migration"/>
    <property type="evidence" value="ECO:0007669"/>
    <property type="project" value="Ensembl"/>
</dbReference>
<dbReference type="GO" id="GO:0097402">
    <property type="term" value="P:neuroblast migration"/>
    <property type="evidence" value="ECO:0007669"/>
    <property type="project" value="Ensembl"/>
</dbReference>
<dbReference type="GO" id="GO:0007422">
    <property type="term" value="P:peripheral nervous system development"/>
    <property type="evidence" value="ECO:0007669"/>
    <property type="project" value="Ensembl"/>
</dbReference>
<dbReference type="GO" id="GO:0072112">
    <property type="term" value="P:podocyte differentiation"/>
    <property type="evidence" value="ECO:0007669"/>
    <property type="project" value="Ensembl"/>
</dbReference>
<dbReference type="GO" id="GO:0043123">
    <property type="term" value="P:positive regulation of canonical NF-kappaB signal transduction"/>
    <property type="evidence" value="ECO:0007669"/>
    <property type="project" value="Ensembl"/>
</dbReference>
<dbReference type="GO" id="GO:0007497">
    <property type="term" value="P:posterior midgut development"/>
    <property type="evidence" value="ECO:0007669"/>
    <property type="project" value="Ensembl"/>
</dbReference>
<dbReference type="GO" id="GO:0071806">
    <property type="term" value="P:protein transmembrane transport"/>
    <property type="evidence" value="ECO:0007669"/>
    <property type="project" value="Ensembl"/>
</dbReference>
<dbReference type="GO" id="GO:0002027">
    <property type="term" value="P:regulation of heart rate"/>
    <property type="evidence" value="ECO:0007669"/>
    <property type="project" value="Ensembl"/>
</dbReference>
<dbReference type="GO" id="GO:0006885">
    <property type="term" value="P:regulation of pH"/>
    <property type="evidence" value="ECO:0007669"/>
    <property type="project" value="Ensembl"/>
</dbReference>
<dbReference type="GO" id="GO:0097018">
    <property type="term" value="P:renal albumin absorption"/>
    <property type="evidence" value="ECO:0007669"/>
    <property type="project" value="Ensembl"/>
</dbReference>
<dbReference type="GO" id="GO:0035812">
    <property type="term" value="P:renal sodium excretion"/>
    <property type="evidence" value="ECO:0007669"/>
    <property type="project" value="Ensembl"/>
</dbReference>
<dbReference type="GO" id="GO:0070294">
    <property type="term" value="P:renal sodium ion absorption"/>
    <property type="evidence" value="ECO:0007669"/>
    <property type="project" value="Ensembl"/>
</dbReference>
<dbReference type="GO" id="GO:0002001">
    <property type="term" value="P:renin secretion into blood stream"/>
    <property type="evidence" value="ECO:0007669"/>
    <property type="project" value="Ensembl"/>
</dbReference>
<dbReference type="GO" id="GO:1904383">
    <property type="term" value="P:response to sodium phosphate"/>
    <property type="evidence" value="ECO:0007669"/>
    <property type="project" value="Ensembl"/>
</dbReference>
<dbReference type="GO" id="GO:0042310">
    <property type="term" value="P:vasoconstriction"/>
    <property type="evidence" value="ECO:0000318"/>
    <property type="project" value="GO_Central"/>
</dbReference>
<dbReference type="GO" id="GO:0014826">
    <property type="term" value="P:vein smooth muscle contraction"/>
    <property type="evidence" value="ECO:0007669"/>
    <property type="project" value="Ensembl"/>
</dbReference>
<dbReference type="CDD" id="cd15976">
    <property type="entry name" value="7tmA_ET-BR"/>
    <property type="match status" value="1"/>
</dbReference>
<dbReference type="FunFam" id="1.20.1070.10:FF:000076">
    <property type="entry name" value="Endothelin receptor type B"/>
    <property type="match status" value="1"/>
</dbReference>
<dbReference type="Gene3D" id="1.20.1070.10">
    <property type="entry name" value="Rhodopsin 7-helix transmembrane proteins"/>
    <property type="match status" value="1"/>
</dbReference>
<dbReference type="InterPro" id="IPR000499">
    <property type="entry name" value="Endthln_rcpt"/>
</dbReference>
<dbReference type="InterPro" id="IPR001112">
    <property type="entry name" value="ETB_rcpt"/>
</dbReference>
<dbReference type="InterPro" id="IPR051193">
    <property type="entry name" value="GPCR_endothelin_rcpt"/>
</dbReference>
<dbReference type="InterPro" id="IPR000276">
    <property type="entry name" value="GPCR_Rhodpsn"/>
</dbReference>
<dbReference type="InterPro" id="IPR017452">
    <property type="entry name" value="GPCR_Rhodpsn_7TM"/>
</dbReference>
<dbReference type="PANTHER" id="PTHR46099:SF3">
    <property type="entry name" value="ENDOTHELIN RECEPTOR TYPE B"/>
    <property type="match status" value="1"/>
</dbReference>
<dbReference type="PANTHER" id="PTHR46099">
    <property type="entry name" value="G_PROTEIN_RECEP_F1_2 DOMAIN-CONTAINING PROTEIN"/>
    <property type="match status" value="1"/>
</dbReference>
<dbReference type="Pfam" id="PF00001">
    <property type="entry name" value="7tm_1"/>
    <property type="match status" value="1"/>
</dbReference>
<dbReference type="PRINTS" id="PR00571">
    <property type="entry name" value="ENDOTHELINBR"/>
</dbReference>
<dbReference type="PRINTS" id="PR00366">
    <property type="entry name" value="ENDOTHELINR"/>
</dbReference>
<dbReference type="PRINTS" id="PR00237">
    <property type="entry name" value="GPCRRHODOPSN"/>
</dbReference>
<dbReference type="SMART" id="SM01381">
    <property type="entry name" value="7TM_GPCR_Srsx"/>
    <property type="match status" value="1"/>
</dbReference>
<dbReference type="SUPFAM" id="SSF81321">
    <property type="entry name" value="Family A G protein-coupled receptor-like"/>
    <property type="match status" value="1"/>
</dbReference>
<dbReference type="PROSITE" id="PS00237">
    <property type="entry name" value="G_PROTEIN_RECEP_F1_1"/>
    <property type="match status" value="1"/>
</dbReference>
<dbReference type="PROSITE" id="PS50262">
    <property type="entry name" value="G_PROTEIN_RECEP_F1_2"/>
    <property type="match status" value="1"/>
</dbReference>
<proteinExistence type="evidence at protein level"/>
<protein>
    <recommendedName>
        <fullName evidence="7">Endothelin receptor type B</fullName>
        <shortName>ET-B</shortName>
        <shortName>ET-BR</shortName>
    </recommendedName>
    <alternativeName>
        <fullName>Endothelin receptor non-selective type</fullName>
    </alternativeName>
</protein>
<reference key="1">
    <citation type="journal article" date="1991" name="J. Biol. Chem.">
        <title>Primary structure of bovine endothelin ETB receptor and identification of signal peptidase and metal proteinase cleavage sites.</title>
        <authorList>
            <person name="Saito Y."/>
            <person name="Mizuno T."/>
            <person name="Itakura M."/>
            <person name="Suzuki Y."/>
            <person name="Ito T."/>
            <person name="Hagiwara H."/>
            <person name="Hirose S."/>
        </authorList>
    </citation>
    <scope>NUCLEOTIDE SEQUENCE [GENOMIC DNA / MRNA]</scope>
    <scope>PARTIAL PROTEIN SEQUENCE</scope>
</reference>
<reference key="2">
    <citation type="submission" date="2006-08" db="EMBL/GenBank/DDBJ databases">
        <authorList>
            <consortium name="NIH - Mammalian Gene Collection (MGC) project"/>
        </authorList>
    </citation>
    <scope>NUCLEOTIDE SEQUENCE [LARGE SCALE MRNA]</scope>
    <source>
        <strain>Hereford</strain>
        <tissue>Thymus</tissue>
    </source>
</reference>
<reference key="3">
    <citation type="journal article" date="1991" name="J. Biol. Chem.">
        <title>Purification and characterization of bovine lung endothelin receptor.</title>
        <authorList>
            <person name="Kozuka M."/>
            <person name="Ito T."/>
            <person name="Hirose S."/>
            <person name="Lodhi K.M."/>
            <person name="Hagiwara H."/>
        </authorList>
    </citation>
    <scope>PROTEIN SEQUENCE OF 124-127; 262-269; 304-315; 417-421 AND 424-432</scope>
    <source>
        <tissue>Lung</tissue>
    </source>
</reference>
<reference key="4">
    <citation type="journal article" date="1995" name="Eur. J. Biochem.">
        <title>Isolation of the endothelin B receptor from bovine lung. Structure, signal sequence, and binding site.</title>
        <authorList>
            <person name="Hick S."/>
            <person name="Heidemann I."/>
            <person name="Soskic V."/>
            <person name="Muller-Esterl W."/>
            <person name="Godovac-Zimmermann J."/>
        </authorList>
    </citation>
    <scope>PARTIAL PROTEIN SEQUENCE</scope>
    <source>
        <tissue>Lung</tissue>
    </source>
</reference>
<reference key="5">
    <citation type="journal article" date="1998" name="J. Biol. Chem.">
        <title>Post-translational modifications of endothelin receptor B from bovine lungs analyzed by mass spectrometry.</title>
        <authorList>
            <person name="Roos M."/>
            <person name="Soskic V."/>
            <person name="Poznanovic S."/>
            <person name="Godovac-Zimmermann J."/>
        </authorList>
    </citation>
    <scope>PROTEIN SEQUENCE OF 27-32</scope>
    <scope>PALMITOYLATION AT CYS-402 AND CYS-404</scope>
    <scope>PHOSPHORYLATION AT SER-304; SER-418; TYR-438; SER-439; SER-440 AND SER-441</scope>
    <scope>IDENTIFICATION BY MASS SPECTROMETRY</scope>
    <source>
        <tissue>Lung</tissue>
    </source>
</reference>
<sequence length="441" mass="49371">MQPLPSLCGRALVALILACGVAGIQAEEREFPPAGATQPLPGTGEMMETPTETSWPGRSNASDPRSSATPQIPRGGRMAGIPPRTPPPCDGPIEIKETFKYINTVVSCLVFVLGIIGNSTLLRIIYKNKCMRNGPNILIASLALGDLLHIIIDIPINTYKLLAKDWPFGVEMCKLVPFIQKASVGITVLSLCALSIDRYRAVASWSRIKGIGVPKWTAVEIVLIWVVSVVLAVPEAVGFDIITSDHIGNKLRICLLHPTQKTAFMQFYKTAKDWWLFSFYFCLPLAITALFYTLMTCEMLRKKSGMQIALNDHLKQRREVAKTVFCLVLVFALCWLPLHLSRILKLTLYDQHDPRRCEFLSFLLVLDYIGINMASLNSCINPIALYLVSKRFKNCFKSCLCCWCQSFEEKQSLEEKQSCLKFKANDHGYDNFRSSNKYSSS</sequence>
<organism>
    <name type="scientific">Bos taurus</name>
    <name type="common">Bovine</name>
    <dbReference type="NCBI Taxonomy" id="9913"/>
    <lineage>
        <taxon>Eukaryota</taxon>
        <taxon>Metazoa</taxon>
        <taxon>Chordata</taxon>
        <taxon>Craniata</taxon>
        <taxon>Vertebrata</taxon>
        <taxon>Euteleostomi</taxon>
        <taxon>Mammalia</taxon>
        <taxon>Eutheria</taxon>
        <taxon>Laurasiatheria</taxon>
        <taxon>Artiodactyla</taxon>
        <taxon>Ruminantia</taxon>
        <taxon>Pecora</taxon>
        <taxon>Bovidae</taxon>
        <taxon>Bovinae</taxon>
        <taxon>Bos</taxon>
    </lineage>
</organism>
<evidence type="ECO:0000250" key="1">
    <source>
        <dbReference type="UniProtKB" id="P24530"/>
    </source>
</evidence>
<evidence type="ECO:0000255" key="2"/>
<evidence type="ECO:0000255" key="3">
    <source>
        <dbReference type="PROSITE-ProRule" id="PRU00521"/>
    </source>
</evidence>
<evidence type="ECO:0000256" key="4">
    <source>
        <dbReference type="SAM" id="MobiDB-lite"/>
    </source>
</evidence>
<evidence type="ECO:0000269" key="5">
    <source>
    </source>
</evidence>
<evidence type="ECO:0000269" key="6">
    <source>
    </source>
</evidence>
<evidence type="ECO:0000305" key="7"/>
<evidence type="ECO:0000305" key="8">
    <source>
    </source>
</evidence>
<evidence type="ECO:0000305" key="9">
    <source>
    </source>
</evidence>